<comment type="function">
    <text evidence="1">Involved in peptide bond synthesis. Alleviates ribosome stalling that occurs when 3 or more consecutive Pro residues or the sequence PPG is present in a protein, possibly by augmenting the peptidyl transferase activity of the ribosome. Modification of Lys-34 is required for alleviation.</text>
</comment>
<comment type="pathway">
    <text evidence="1">Protein biosynthesis; polypeptide chain elongation.</text>
</comment>
<comment type="subcellular location">
    <subcellularLocation>
        <location evidence="1">Cytoplasm</location>
    </subcellularLocation>
</comment>
<comment type="PTM">
    <text evidence="1">May be beta-lysylated on the epsilon-amino group of Lys-34 by the combined action of EpmA and EpmB, and then hydroxylated on the C5 position of the same residue by EpmC (if this protein is present). Lysylation is critical for the stimulatory effect of EF-P on peptide-bond formation. The lysylation moiety may extend toward the peptidyltransferase center and stabilize the terminal 3-CCA end of the tRNA. Hydroxylation of the C5 position on Lys-34 may allow additional potential stabilizing hydrogen-bond interactions with the P-tRNA.</text>
</comment>
<comment type="similarity">
    <text evidence="1">Belongs to the elongation factor P family.</text>
</comment>
<sequence length="188" mass="20590">MASYSTNEFRSGLKIMLDGEPCAIIENEFVKPGKGQAFNRVRLRKLVSGKVLEKTFKSGDSVEAADVMDINLTYLYNDGEFWHFMNNENFEQLAADAKVVGDNAKWLVEQAECVLTLWNGQPIAVTPPNFVELEITETDPGLKGDTAGTGGKPATLTTGAVVKVPLFVQIGEVIKVDTRSGDYVSRVK</sequence>
<protein>
    <recommendedName>
        <fullName evidence="1">Elongation factor P</fullName>
        <shortName evidence="1">EF-P</shortName>
    </recommendedName>
</protein>
<evidence type="ECO:0000255" key="1">
    <source>
        <dbReference type="HAMAP-Rule" id="MF_00141"/>
    </source>
</evidence>
<keyword id="KW-0963">Cytoplasm</keyword>
<keyword id="KW-0251">Elongation factor</keyword>
<keyword id="KW-0379">Hydroxylation</keyword>
<keyword id="KW-0648">Protein biosynthesis</keyword>
<reference key="1">
    <citation type="journal article" date="2006" name="Genome Res.">
        <title>Massive genome erosion and functional adaptations provide insights into the symbiotic lifestyle of Sodalis glossinidius in the tsetse host.</title>
        <authorList>
            <person name="Toh H."/>
            <person name="Weiss B.L."/>
            <person name="Perkin S.A.H."/>
            <person name="Yamashita A."/>
            <person name="Oshima K."/>
            <person name="Hattori M."/>
            <person name="Aksoy S."/>
        </authorList>
    </citation>
    <scope>NUCLEOTIDE SEQUENCE [LARGE SCALE GENOMIC DNA]</scope>
    <source>
        <strain>morsitans</strain>
    </source>
</reference>
<feature type="chain" id="PRO_1000010861" description="Elongation factor P">
    <location>
        <begin position="1"/>
        <end position="188"/>
    </location>
</feature>
<feature type="modified residue" description="N6-(3,6-diaminohexanoyl)-5-hydroxylysine" evidence="1">
    <location>
        <position position="34"/>
    </location>
</feature>
<name>EFP_SODGM</name>
<gene>
    <name evidence="1" type="primary">efp</name>
    <name type="ordered locus">SG0309</name>
</gene>
<accession>Q2NW91</accession>
<proteinExistence type="inferred from homology"/>
<dbReference type="EMBL" id="AP008232">
    <property type="protein sequence ID" value="BAE73584.1"/>
    <property type="molecule type" value="Genomic_DNA"/>
</dbReference>
<dbReference type="RefSeq" id="WP_011410172.1">
    <property type="nucleotide sequence ID" value="NC_007712.1"/>
</dbReference>
<dbReference type="SMR" id="Q2NW91"/>
<dbReference type="STRING" id="343509.SG0309"/>
<dbReference type="KEGG" id="sgl:SG0309"/>
<dbReference type="eggNOG" id="COG0231">
    <property type="taxonomic scope" value="Bacteria"/>
</dbReference>
<dbReference type="HOGENOM" id="CLU_074944_0_0_6"/>
<dbReference type="OrthoDB" id="9801844at2"/>
<dbReference type="BioCyc" id="SGLO343509:SGP1_RS02845-MONOMER"/>
<dbReference type="UniPathway" id="UPA00345"/>
<dbReference type="Proteomes" id="UP000001932">
    <property type="component" value="Chromosome"/>
</dbReference>
<dbReference type="GO" id="GO:0005737">
    <property type="term" value="C:cytoplasm"/>
    <property type="evidence" value="ECO:0007669"/>
    <property type="project" value="UniProtKB-SubCell"/>
</dbReference>
<dbReference type="GO" id="GO:0003746">
    <property type="term" value="F:translation elongation factor activity"/>
    <property type="evidence" value="ECO:0007669"/>
    <property type="project" value="UniProtKB-UniRule"/>
</dbReference>
<dbReference type="GO" id="GO:0043043">
    <property type="term" value="P:peptide biosynthetic process"/>
    <property type="evidence" value="ECO:0007669"/>
    <property type="project" value="InterPro"/>
</dbReference>
<dbReference type="CDD" id="cd04470">
    <property type="entry name" value="S1_EF-P_repeat_1"/>
    <property type="match status" value="1"/>
</dbReference>
<dbReference type="CDD" id="cd05794">
    <property type="entry name" value="S1_EF-P_repeat_2"/>
    <property type="match status" value="1"/>
</dbReference>
<dbReference type="FunFam" id="2.30.30.30:FF:000003">
    <property type="entry name" value="Elongation factor P"/>
    <property type="match status" value="1"/>
</dbReference>
<dbReference type="FunFam" id="2.40.50.140:FF:000004">
    <property type="entry name" value="Elongation factor P"/>
    <property type="match status" value="1"/>
</dbReference>
<dbReference type="FunFam" id="2.40.50.140:FF:000009">
    <property type="entry name" value="Elongation factor P"/>
    <property type="match status" value="1"/>
</dbReference>
<dbReference type="Gene3D" id="2.30.30.30">
    <property type="match status" value="1"/>
</dbReference>
<dbReference type="Gene3D" id="2.40.50.140">
    <property type="entry name" value="Nucleic acid-binding proteins"/>
    <property type="match status" value="2"/>
</dbReference>
<dbReference type="HAMAP" id="MF_00141">
    <property type="entry name" value="EF_P"/>
    <property type="match status" value="1"/>
</dbReference>
<dbReference type="InterPro" id="IPR015365">
    <property type="entry name" value="Elong-fact-P_C"/>
</dbReference>
<dbReference type="InterPro" id="IPR012340">
    <property type="entry name" value="NA-bd_OB-fold"/>
</dbReference>
<dbReference type="InterPro" id="IPR014722">
    <property type="entry name" value="Rib_uL2_dom2"/>
</dbReference>
<dbReference type="InterPro" id="IPR020599">
    <property type="entry name" value="Transl_elong_fac_P/YeiP"/>
</dbReference>
<dbReference type="InterPro" id="IPR013185">
    <property type="entry name" value="Transl_elong_KOW-like"/>
</dbReference>
<dbReference type="InterPro" id="IPR001059">
    <property type="entry name" value="Transl_elong_P/YeiP_cen"/>
</dbReference>
<dbReference type="InterPro" id="IPR013852">
    <property type="entry name" value="Transl_elong_P/YeiP_CS"/>
</dbReference>
<dbReference type="InterPro" id="IPR011768">
    <property type="entry name" value="Transl_elongation_fac_P"/>
</dbReference>
<dbReference type="InterPro" id="IPR008991">
    <property type="entry name" value="Translation_prot_SH3-like_sf"/>
</dbReference>
<dbReference type="NCBIfam" id="TIGR00038">
    <property type="entry name" value="efp"/>
    <property type="match status" value="1"/>
</dbReference>
<dbReference type="NCBIfam" id="NF001810">
    <property type="entry name" value="PRK00529.1"/>
    <property type="match status" value="1"/>
</dbReference>
<dbReference type="PANTHER" id="PTHR30053">
    <property type="entry name" value="ELONGATION FACTOR P"/>
    <property type="match status" value="1"/>
</dbReference>
<dbReference type="PANTHER" id="PTHR30053:SF12">
    <property type="entry name" value="ELONGATION FACTOR P (EF-P) FAMILY PROTEIN"/>
    <property type="match status" value="1"/>
</dbReference>
<dbReference type="Pfam" id="PF01132">
    <property type="entry name" value="EFP"/>
    <property type="match status" value="1"/>
</dbReference>
<dbReference type="Pfam" id="PF08207">
    <property type="entry name" value="EFP_N"/>
    <property type="match status" value="1"/>
</dbReference>
<dbReference type="Pfam" id="PF09285">
    <property type="entry name" value="Elong-fact-P_C"/>
    <property type="match status" value="1"/>
</dbReference>
<dbReference type="PIRSF" id="PIRSF005901">
    <property type="entry name" value="EF-P"/>
    <property type="match status" value="1"/>
</dbReference>
<dbReference type="SMART" id="SM01185">
    <property type="entry name" value="EFP"/>
    <property type="match status" value="1"/>
</dbReference>
<dbReference type="SMART" id="SM00841">
    <property type="entry name" value="Elong-fact-P_C"/>
    <property type="match status" value="1"/>
</dbReference>
<dbReference type="SUPFAM" id="SSF50249">
    <property type="entry name" value="Nucleic acid-binding proteins"/>
    <property type="match status" value="2"/>
</dbReference>
<dbReference type="SUPFAM" id="SSF50104">
    <property type="entry name" value="Translation proteins SH3-like domain"/>
    <property type="match status" value="1"/>
</dbReference>
<dbReference type="PROSITE" id="PS01275">
    <property type="entry name" value="EFP"/>
    <property type="match status" value="1"/>
</dbReference>
<organism>
    <name type="scientific">Sodalis glossinidius (strain morsitans)</name>
    <dbReference type="NCBI Taxonomy" id="343509"/>
    <lineage>
        <taxon>Bacteria</taxon>
        <taxon>Pseudomonadati</taxon>
        <taxon>Pseudomonadota</taxon>
        <taxon>Gammaproteobacteria</taxon>
        <taxon>Enterobacterales</taxon>
        <taxon>Bruguierivoracaceae</taxon>
        <taxon>Sodalis</taxon>
    </lineage>
</organism>